<accession>Q0AEU1</accession>
<name>HIS6_NITEC</name>
<organism>
    <name type="scientific">Nitrosomonas eutropha (strain DSM 101675 / C91 / Nm57)</name>
    <dbReference type="NCBI Taxonomy" id="335283"/>
    <lineage>
        <taxon>Bacteria</taxon>
        <taxon>Pseudomonadati</taxon>
        <taxon>Pseudomonadota</taxon>
        <taxon>Betaproteobacteria</taxon>
        <taxon>Nitrosomonadales</taxon>
        <taxon>Nitrosomonadaceae</taxon>
        <taxon>Nitrosomonas</taxon>
    </lineage>
</organism>
<gene>
    <name evidence="1" type="primary">hisF</name>
    <name type="ordered locus">Neut_1909</name>
</gene>
<proteinExistence type="inferred from homology"/>
<evidence type="ECO:0000255" key="1">
    <source>
        <dbReference type="HAMAP-Rule" id="MF_01013"/>
    </source>
</evidence>
<feature type="chain" id="PRO_1000063103" description="Imidazole glycerol phosphate synthase subunit HisF">
    <location>
        <begin position="1"/>
        <end position="258"/>
    </location>
</feature>
<feature type="active site" evidence="1">
    <location>
        <position position="12"/>
    </location>
</feature>
<feature type="active site" evidence="1">
    <location>
        <position position="131"/>
    </location>
</feature>
<sequence>MGLAKRIIPCLDIKDGRVVKGVNFVSLRDAGDPVEIARSYNEQGADELVFLDITASVENRDLILHIVEKVASQVFIPLTVGGGVCKAEDVRRLLNAGADKVSINTSAVLNPELIKESADHYGSQCIVIAIDARQTSDGNPESPRWEVFTHGGRKPTGLDAIEWAQKIQSLGAGEILLTSMDRDGTRSGFDLVLTRTISDAVDLPVIASGGVGNLDHLVDGILQGHADAVLAASIFHYGEFSIRQAKEYLLSHGIEVRL</sequence>
<protein>
    <recommendedName>
        <fullName evidence="1">Imidazole glycerol phosphate synthase subunit HisF</fullName>
        <ecNumber evidence="1">4.3.2.10</ecNumber>
    </recommendedName>
    <alternativeName>
        <fullName evidence="1">IGP synthase cyclase subunit</fullName>
    </alternativeName>
    <alternativeName>
        <fullName evidence="1">IGP synthase subunit HisF</fullName>
    </alternativeName>
    <alternativeName>
        <fullName evidence="1">ImGP synthase subunit HisF</fullName>
        <shortName evidence="1">IGPS subunit HisF</shortName>
    </alternativeName>
</protein>
<reference key="1">
    <citation type="journal article" date="2007" name="Environ. Microbiol.">
        <title>Whole-genome analysis of the ammonia-oxidizing bacterium, Nitrosomonas eutropha C91: implications for niche adaptation.</title>
        <authorList>
            <person name="Stein L.Y."/>
            <person name="Arp D.J."/>
            <person name="Berube P.M."/>
            <person name="Chain P.S."/>
            <person name="Hauser L."/>
            <person name="Jetten M.S."/>
            <person name="Klotz M.G."/>
            <person name="Larimer F.W."/>
            <person name="Norton J.M."/>
            <person name="Op den Camp H.J.M."/>
            <person name="Shin M."/>
            <person name="Wei X."/>
        </authorList>
    </citation>
    <scope>NUCLEOTIDE SEQUENCE [LARGE SCALE GENOMIC DNA]</scope>
    <source>
        <strain>DSM 101675 / C91 / Nm57</strain>
    </source>
</reference>
<keyword id="KW-0028">Amino-acid biosynthesis</keyword>
<keyword id="KW-0963">Cytoplasm</keyword>
<keyword id="KW-0368">Histidine biosynthesis</keyword>
<keyword id="KW-0456">Lyase</keyword>
<comment type="function">
    <text evidence="1">IGPS catalyzes the conversion of PRFAR and glutamine to IGP, AICAR and glutamate. The HisF subunit catalyzes the cyclization activity that produces IGP and AICAR from PRFAR using the ammonia provided by the HisH subunit.</text>
</comment>
<comment type="catalytic activity">
    <reaction evidence="1">
        <text>5-[(5-phospho-1-deoxy-D-ribulos-1-ylimino)methylamino]-1-(5-phospho-beta-D-ribosyl)imidazole-4-carboxamide + L-glutamine = D-erythro-1-(imidazol-4-yl)glycerol 3-phosphate + 5-amino-1-(5-phospho-beta-D-ribosyl)imidazole-4-carboxamide + L-glutamate + H(+)</text>
        <dbReference type="Rhea" id="RHEA:24793"/>
        <dbReference type="ChEBI" id="CHEBI:15378"/>
        <dbReference type="ChEBI" id="CHEBI:29985"/>
        <dbReference type="ChEBI" id="CHEBI:58278"/>
        <dbReference type="ChEBI" id="CHEBI:58359"/>
        <dbReference type="ChEBI" id="CHEBI:58475"/>
        <dbReference type="ChEBI" id="CHEBI:58525"/>
        <dbReference type="EC" id="4.3.2.10"/>
    </reaction>
</comment>
<comment type="pathway">
    <text evidence="1">Amino-acid biosynthesis; L-histidine biosynthesis; L-histidine from 5-phospho-alpha-D-ribose 1-diphosphate: step 5/9.</text>
</comment>
<comment type="subunit">
    <text evidence="1">Heterodimer of HisH and HisF.</text>
</comment>
<comment type="subcellular location">
    <subcellularLocation>
        <location evidence="1">Cytoplasm</location>
    </subcellularLocation>
</comment>
<comment type="similarity">
    <text evidence="1">Belongs to the HisA/HisF family.</text>
</comment>
<dbReference type="EC" id="4.3.2.10" evidence="1"/>
<dbReference type="EMBL" id="CP000450">
    <property type="protein sequence ID" value="ABI60141.1"/>
    <property type="molecule type" value="Genomic_DNA"/>
</dbReference>
<dbReference type="RefSeq" id="WP_011634943.1">
    <property type="nucleotide sequence ID" value="NC_008344.1"/>
</dbReference>
<dbReference type="SMR" id="Q0AEU1"/>
<dbReference type="STRING" id="335283.Neut_1909"/>
<dbReference type="KEGG" id="net:Neut_1909"/>
<dbReference type="eggNOG" id="COG0107">
    <property type="taxonomic scope" value="Bacteria"/>
</dbReference>
<dbReference type="HOGENOM" id="CLU_048577_4_0_4"/>
<dbReference type="OrthoDB" id="9781903at2"/>
<dbReference type="UniPathway" id="UPA00031">
    <property type="reaction ID" value="UER00010"/>
</dbReference>
<dbReference type="Proteomes" id="UP000001966">
    <property type="component" value="Chromosome"/>
</dbReference>
<dbReference type="GO" id="GO:0005737">
    <property type="term" value="C:cytoplasm"/>
    <property type="evidence" value="ECO:0007669"/>
    <property type="project" value="UniProtKB-SubCell"/>
</dbReference>
<dbReference type="GO" id="GO:0000107">
    <property type="term" value="F:imidazoleglycerol-phosphate synthase activity"/>
    <property type="evidence" value="ECO:0007669"/>
    <property type="project" value="UniProtKB-UniRule"/>
</dbReference>
<dbReference type="GO" id="GO:0016829">
    <property type="term" value="F:lyase activity"/>
    <property type="evidence" value="ECO:0007669"/>
    <property type="project" value="UniProtKB-KW"/>
</dbReference>
<dbReference type="GO" id="GO:0000105">
    <property type="term" value="P:L-histidine biosynthetic process"/>
    <property type="evidence" value="ECO:0007669"/>
    <property type="project" value="UniProtKB-UniRule"/>
</dbReference>
<dbReference type="CDD" id="cd04731">
    <property type="entry name" value="HisF"/>
    <property type="match status" value="1"/>
</dbReference>
<dbReference type="FunFam" id="3.20.20.70:FF:000006">
    <property type="entry name" value="Imidazole glycerol phosphate synthase subunit HisF"/>
    <property type="match status" value="1"/>
</dbReference>
<dbReference type="Gene3D" id="3.20.20.70">
    <property type="entry name" value="Aldolase class I"/>
    <property type="match status" value="1"/>
</dbReference>
<dbReference type="HAMAP" id="MF_01013">
    <property type="entry name" value="HisF"/>
    <property type="match status" value="1"/>
</dbReference>
<dbReference type="InterPro" id="IPR013785">
    <property type="entry name" value="Aldolase_TIM"/>
</dbReference>
<dbReference type="InterPro" id="IPR006062">
    <property type="entry name" value="His_biosynth"/>
</dbReference>
<dbReference type="InterPro" id="IPR004651">
    <property type="entry name" value="HisF"/>
</dbReference>
<dbReference type="InterPro" id="IPR050064">
    <property type="entry name" value="IGPS_HisA/HisF"/>
</dbReference>
<dbReference type="InterPro" id="IPR011060">
    <property type="entry name" value="RibuloseP-bd_barrel"/>
</dbReference>
<dbReference type="NCBIfam" id="TIGR00735">
    <property type="entry name" value="hisF"/>
    <property type="match status" value="1"/>
</dbReference>
<dbReference type="PANTHER" id="PTHR21235:SF2">
    <property type="entry name" value="IMIDAZOLE GLYCEROL PHOSPHATE SYNTHASE HISHF"/>
    <property type="match status" value="1"/>
</dbReference>
<dbReference type="PANTHER" id="PTHR21235">
    <property type="entry name" value="IMIDAZOLE GLYCEROL PHOSPHATE SYNTHASE SUBUNIT HISF/H IGP SYNTHASE SUBUNIT HISF/H"/>
    <property type="match status" value="1"/>
</dbReference>
<dbReference type="Pfam" id="PF00977">
    <property type="entry name" value="His_biosynth"/>
    <property type="match status" value="1"/>
</dbReference>
<dbReference type="SUPFAM" id="SSF51366">
    <property type="entry name" value="Ribulose-phoshate binding barrel"/>
    <property type="match status" value="1"/>
</dbReference>